<comment type="function">
    <text evidence="1">Catalyzes the attachment of L-aspartate to tRNA(Asp) in a two-step reaction: L-aspartate is first activated by ATP to form Asp-AMP and then transferred to the acceptor end of tRNA(Asp).</text>
</comment>
<comment type="catalytic activity">
    <reaction evidence="1">
        <text>tRNA(Asp) + L-aspartate + ATP = L-aspartyl-tRNA(Asp) + AMP + diphosphate</text>
        <dbReference type="Rhea" id="RHEA:19649"/>
        <dbReference type="Rhea" id="RHEA-COMP:9660"/>
        <dbReference type="Rhea" id="RHEA-COMP:9678"/>
        <dbReference type="ChEBI" id="CHEBI:29991"/>
        <dbReference type="ChEBI" id="CHEBI:30616"/>
        <dbReference type="ChEBI" id="CHEBI:33019"/>
        <dbReference type="ChEBI" id="CHEBI:78442"/>
        <dbReference type="ChEBI" id="CHEBI:78516"/>
        <dbReference type="ChEBI" id="CHEBI:456215"/>
        <dbReference type="EC" id="6.1.1.12"/>
    </reaction>
</comment>
<comment type="subunit">
    <text evidence="1">Homodimer.</text>
</comment>
<comment type="subcellular location">
    <subcellularLocation>
        <location evidence="1">Cytoplasm</location>
    </subcellularLocation>
</comment>
<comment type="similarity">
    <text evidence="1">Belongs to the class-II aminoacyl-tRNA synthetase family. Type 1 subfamily.</text>
</comment>
<name>SYD_EDWI9</name>
<proteinExistence type="inferred from homology"/>
<gene>
    <name evidence="1" type="primary">aspS</name>
    <name type="ordered locus">NT01EI_1594</name>
</gene>
<keyword id="KW-0030">Aminoacyl-tRNA synthetase</keyword>
<keyword id="KW-0067">ATP-binding</keyword>
<keyword id="KW-0963">Cytoplasm</keyword>
<keyword id="KW-0436">Ligase</keyword>
<keyword id="KW-0547">Nucleotide-binding</keyword>
<keyword id="KW-0648">Protein biosynthesis</keyword>
<feature type="chain" id="PRO_1000202156" description="Aspartate--tRNA ligase">
    <location>
        <begin position="1"/>
        <end position="591"/>
    </location>
</feature>
<feature type="region of interest" description="Aspartate" evidence="1">
    <location>
        <begin position="195"/>
        <end position="198"/>
    </location>
</feature>
<feature type="binding site" evidence="1">
    <location>
        <position position="171"/>
    </location>
    <ligand>
        <name>L-aspartate</name>
        <dbReference type="ChEBI" id="CHEBI:29991"/>
    </ligand>
</feature>
<feature type="binding site" evidence="1">
    <location>
        <begin position="217"/>
        <end position="219"/>
    </location>
    <ligand>
        <name>ATP</name>
        <dbReference type="ChEBI" id="CHEBI:30616"/>
    </ligand>
</feature>
<feature type="binding site" evidence="1">
    <location>
        <position position="217"/>
    </location>
    <ligand>
        <name>L-aspartate</name>
        <dbReference type="ChEBI" id="CHEBI:29991"/>
    </ligand>
</feature>
<feature type="binding site" evidence="1">
    <location>
        <position position="226"/>
    </location>
    <ligand>
        <name>ATP</name>
        <dbReference type="ChEBI" id="CHEBI:30616"/>
    </ligand>
</feature>
<feature type="binding site" evidence="1">
    <location>
        <position position="448"/>
    </location>
    <ligand>
        <name>L-aspartate</name>
        <dbReference type="ChEBI" id="CHEBI:29991"/>
    </ligand>
</feature>
<feature type="binding site" evidence="1">
    <location>
        <position position="482"/>
    </location>
    <ligand>
        <name>ATP</name>
        <dbReference type="ChEBI" id="CHEBI:30616"/>
    </ligand>
</feature>
<feature type="binding site" evidence="1">
    <location>
        <position position="489"/>
    </location>
    <ligand>
        <name>L-aspartate</name>
        <dbReference type="ChEBI" id="CHEBI:29991"/>
    </ligand>
</feature>
<feature type="binding site" evidence="1">
    <location>
        <begin position="534"/>
        <end position="537"/>
    </location>
    <ligand>
        <name>ATP</name>
        <dbReference type="ChEBI" id="CHEBI:30616"/>
    </ligand>
</feature>
<evidence type="ECO:0000255" key="1">
    <source>
        <dbReference type="HAMAP-Rule" id="MF_00044"/>
    </source>
</evidence>
<dbReference type="EC" id="6.1.1.12" evidence="1"/>
<dbReference type="EMBL" id="CP001600">
    <property type="protein sequence ID" value="ACR68778.1"/>
    <property type="molecule type" value="Genomic_DNA"/>
</dbReference>
<dbReference type="RefSeq" id="WP_015870936.1">
    <property type="nucleotide sequence ID" value="NZ_CP169062.1"/>
</dbReference>
<dbReference type="SMR" id="C5B9S7"/>
<dbReference type="STRING" id="67780.B6E78_01165"/>
<dbReference type="GeneID" id="69538571"/>
<dbReference type="KEGG" id="eic:NT01EI_1594"/>
<dbReference type="PATRIC" id="fig|634503.3.peg.1426"/>
<dbReference type="HOGENOM" id="CLU_014330_3_2_6"/>
<dbReference type="OrthoDB" id="9802326at2"/>
<dbReference type="Proteomes" id="UP000001485">
    <property type="component" value="Chromosome"/>
</dbReference>
<dbReference type="GO" id="GO:0005737">
    <property type="term" value="C:cytoplasm"/>
    <property type="evidence" value="ECO:0007669"/>
    <property type="project" value="UniProtKB-SubCell"/>
</dbReference>
<dbReference type="GO" id="GO:0004815">
    <property type="term" value="F:aspartate-tRNA ligase activity"/>
    <property type="evidence" value="ECO:0007669"/>
    <property type="project" value="UniProtKB-UniRule"/>
</dbReference>
<dbReference type="GO" id="GO:0005524">
    <property type="term" value="F:ATP binding"/>
    <property type="evidence" value="ECO:0007669"/>
    <property type="project" value="UniProtKB-UniRule"/>
</dbReference>
<dbReference type="GO" id="GO:0003676">
    <property type="term" value="F:nucleic acid binding"/>
    <property type="evidence" value="ECO:0007669"/>
    <property type="project" value="InterPro"/>
</dbReference>
<dbReference type="GO" id="GO:0006422">
    <property type="term" value="P:aspartyl-tRNA aminoacylation"/>
    <property type="evidence" value="ECO:0007669"/>
    <property type="project" value="UniProtKB-UniRule"/>
</dbReference>
<dbReference type="CDD" id="cd00777">
    <property type="entry name" value="AspRS_core"/>
    <property type="match status" value="1"/>
</dbReference>
<dbReference type="CDD" id="cd04317">
    <property type="entry name" value="EcAspRS_like_N"/>
    <property type="match status" value="1"/>
</dbReference>
<dbReference type="FunFam" id="2.40.50.140:FF:000080">
    <property type="entry name" value="Aspartate--tRNA ligase"/>
    <property type="match status" value="1"/>
</dbReference>
<dbReference type="Gene3D" id="3.30.930.10">
    <property type="entry name" value="Bira Bifunctional Protein, Domain 2"/>
    <property type="match status" value="1"/>
</dbReference>
<dbReference type="Gene3D" id="3.30.1360.30">
    <property type="entry name" value="GAD-like domain"/>
    <property type="match status" value="1"/>
</dbReference>
<dbReference type="Gene3D" id="2.40.50.140">
    <property type="entry name" value="Nucleic acid-binding proteins"/>
    <property type="match status" value="1"/>
</dbReference>
<dbReference type="HAMAP" id="MF_00044">
    <property type="entry name" value="Asp_tRNA_synth_type1"/>
    <property type="match status" value="1"/>
</dbReference>
<dbReference type="InterPro" id="IPR004364">
    <property type="entry name" value="Aa-tRNA-synt_II"/>
</dbReference>
<dbReference type="InterPro" id="IPR006195">
    <property type="entry name" value="aa-tRNA-synth_II"/>
</dbReference>
<dbReference type="InterPro" id="IPR045864">
    <property type="entry name" value="aa-tRNA-synth_II/BPL/LPL"/>
</dbReference>
<dbReference type="InterPro" id="IPR004524">
    <property type="entry name" value="Asp-tRNA-ligase_1"/>
</dbReference>
<dbReference type="InterPro" id="IPR047089">
    <property type="entry name" value="Asp-tRNA-ligase_1_N"/>
</dbReference>
<dbReference type="InterPro" id="IPR002312">
    <property type="entry name" value="Asp/Asn-tRNA-synth_IIb"/>
</dbReference>
<dbReference type="InterPro" id="IPR047090">
    <property type="entry name" value="AspRS_core"/>
</dbReference>
<dbReference type="InterPro" id="IPR004115">
    <property type="entry name" value="GAD-like_sf"/>
</dbReference>
<dbReference type="InterPro" id="IPR029351">
    <property type="entry name" value="GAD_dom"/>
</dbReference>
<dbReference type="InterPro" id="IPR012340">
    <property type="entry name" value="NA-bd_OB-fold"/>
</dbReference>
<dbReference type="InterPro" id="IPR004365">
    <property type="entry name" value="NA-bd_OB_tRNA"/>
</dbReference>
<dbReference type="NCBIfam" id="TIGR00459">
    <property type="entry name" value="aspS_bact"/>
    <property type="match status" value="1"/>
</dbReference>
<dbReference type="NCBIfam" id="NF001750">
    <property type="entry name" value="PRK00476.1"/>
    <property type="match status" value="1"/>
</dbReference>
<dbReference type="PANTHER" id="PTHR22594:SF5">
    <property type="entry name" value="ASPARTATE--TRNA LIGASE, MITOCHONDRIAL"/>
    <property type="match status" value="1"/>
</dbReference>
<dbReference type="PANTHER" id="PTHR22594">
    <property type="entry name" value="ASPARTYL/LYSYL-TRNA SYNTHETASE"/>
    <property type="match status" value="1"/>
</dbReference>
<dbReference type="Pfam" id="PF02938">
    <property type="entry name" value="GAD"/>
    <property type="match status" value="1"/>
</dbReference>
<dbReference type="Pfam" id="PF00152">
    <property type="entry name" value="tRNA-synt_2"/>
    <property type="match status" value="1"/>
</dbReference>
<dbReference type="Pfam" id="PF01336">
    <property type="entry name" value="tRNA_anti-codon"/>
    <property type="match status" value="1"/>
</dbReference>
<dbReference type="PRINTS" id="PR01042">
    <property type="entry name" value="TRNASYNTHASP"/>
</dbReference>
<dbReference type="SUPFAM" id="SSF55681">
    <property type="entry name" value="Class II aaRS and biotin synthetases"/>
    <property type="match status" value="1"/>
</dbReference>
<dbReference type="SUPFAM" id="SSF55261">
    <property type="entry name" value="GAD domain-like"/>
    <property type="match status" value="1"/>
</dbReference>
<dbReference type="SUPFAM" id="SSF50249">
    <property type="entry name" value="Nucleic acid-binding proteins"/>
    <property type="match status" value="1"/>
</dbReference>
<dbReference type="PROSITE" id="PS50862">
    <property type="entry name" value="AA_TRNA_LIGASE_II"/>
    <property type="match status" value="1"/>
</dbReference>
<organism>
    <name type="scientific">Edwardsiella ictaluri (strain 93-146)</name>
    <dbReference type="NCBI Taxonomy" id="634503"/>
    <lineage>
        <taxon>Bacteria</taxon>
        <taxon>Pseudomonadati</taxon>
        <taxon>Pseudomonadota</taxon>
        <taxon>Gammaproteobacteria</taxon>
        <taxon>Enterobacterales</taxon>
        <taxon>Hafniaceae</taxon>
        <taxon>Edwardsiella</taxon>
    </lineage>
</organism>
<sequence length="591" mass="65506">MRTNYCGQLNLSHVGQEVTLCGWVHRRRDLGGLIFIDLRDREGVVQVFFDPDHQDAFRQASELRNEFCVQVTGTVRARPESQRNSEMPTGEIEVFGHGLTLINRAEPLPLDFNQTNSEENRLKYRYLDLRRPEMAARLKTRAKITAFVRRFMDNHGFLDIETPMLTKATPEGARDYLVPSRVHKGKFYALPQSPQLFKQLLMMSGFDRYYQIVKCFRDEDLRADRQPEFTQIDVETSFMSAGQVREIMEALARALWMEIKGVDLGDFPVMTFAEAMRRFGSDKPDLRNPLELVDVADLVKSVDFKVFSGPANDARGRVIALRVPGGATLTRKNIDEYGQFVGIYGAKGLAWMKVNDRAAGMDGVQSPIAKFLNAEVLEGILARSGAQSGDIIFFGADSAKVATDAMGALRLKVGRDLQLTDESRWAPLWVVDFPMFEEDGEGGLAAMHHPFTSPRDISPEALKANPVGAIANAYDMVMNGYEVGGGSVRIHSGAMQSAVFDILGINEQEQREKFGFLLDALKFGTPPHAGLAFGLDRLVMLLTGTENIRDVIAFPKTTAAACPLTDAPSRANPAALQELSIAVCAKQGSDA</sequence>
<protein>
    <recommendedName>
        <fullName evidence="1">Aspartate--tRNA ligase</fullName>
        <ecNumber evidence="1">6.1.1.12</ecNumber>
    </recommendedName>
    <alternativeName>
        <fullName evidence="1">Aspartyl-tRNA synthetase</fullName>
        <shortName evidence="1">AspRS</shortName>
    </alternativeName>
</protein>
<reference key="1">
    <citation type="submission" date="2009-03" db="EMBL/GenBank/DDBJ databases">
        <title>Complete genome sequence of Edwardsiella ictaluri 93-146.</title>
        <authorList>
            <person name="Williams M.L."/>
            <person name="Gillaspy A.F."/>
            <person name="Dyer D.W."/>
            <person name="Thune R.L."/>
            <person name="Waldbieser G.C."/>
            <person name="Schuster S.C."/>
            <person name="Gipson J."/>
            <person name="Zaitshik J."/>
            <person name="Landry C."/>
            <person name="Lawrence M.L."/>
        </authorList>
    </citation>
    <scope>NUCLEOTIDE SEQUENCE [LARGE SCALE GENOMIC DNA]</scope>
    <source>
        <strain>93-146</strain>
    </source>
</reference>
<accession>C5B9S7</accession>